<comment type="function">
    <text>Molecular chaperone; assists the folding of proteins upon ATP hydrolysis. Known to play a role, in vitro, in the folding of actin and tubulin. In yeast may play a role in mitotic spindle formation.</text>
</comment>
<comment type="subunit">
    <text>Heterooligomeric complex of about 850 to 900 kDa that forms two stacked rings, 12 to 16 nm in diameter.</text>
</comment>
<comment type="subcellular location">
    <subcellularLocation>
        <location>Cytoplasm</location>
    </subcellularLocation>
</comment>
<comment type="similarity">
    <text evidence="1">Belongs to the TCP-1 chaperonin family.</text>
</comment>
<comment type="sequence caution" evidence="1">
    <conflict type="erroneous initiation">
        <sequence resource="EMBL-CDS" id="AAA53132"/>
    </conflict>
</comment>
<protein>
    <recommendedName>
        <fullName>T-complex protein 1 subunit epsilon</fullName>
        <shortName>TCP-1-epsilon</shortName>
    </recommendedName>
    <alternativeName>
        <fullName>CCT-epsilon</fullName>
    </alternativeName>
</protein>
<organism>
    <name type="scientific">Saccharomyces cerevisiae (strain ATCC 204508 / S288c)</name>
    <name type="common">Baker's yeast</name>
    <dbReference type="NCBI Taxonomy" id="559292"/>
    <lineage>
        <taxon>Eukaryota</taxon>
        <taxon>Fungi</taxon>
        <taxon>Dikarya</taxon>
        <taxon>Ascomycota</taxon>
        <taxon>Saccharomycotina</taxon>
        <taxon>Saccharomycetes</taxon>
        <taxon>Saccharomycetales</taxon>
        <taxon>Saccharomycetaceae</taxon>
        <taxon>Saccharomyces</taxon>
    </lineage>
</organism>
<evidence type="ECO:0000305" key="1"/>
<evidence type="ECO:0007829" key="2">
    <source>
        <dbReference type="PDB" id="6KS6"/>
    </source>
</evidence>
<evidence type="ECO:0007829" key="3">
    <source>
        <dbReference type="PDB" id="7YLW"/>
    </source>
</evidence>
<evidence type="ECO:0007829" key="4">
    <source>
        <dbReference type="PDB" id="7YLY"/>
    </source>
</evidence>
<feature type="chain" id="PRO_0000128354" description="T-complex protein 1 subunit epsilon">
    <location>
        <begin position="1"/>
        <end position="562"/>
    </location>
</feature>
<feature type="sequence conflict" description="In Ref. 1; AAA53132." evidence="1" ref="1">
    <original>A</original>
    <variation>T</variation>
    <location>
        <position position="3"/>
    </location>
</feature>
<feature type="sequence conflict" description="In Ref. 1; AAA53132." evidence="1" ref="1">
    <original>R</original>
    <variation>T</variation>
    <location>
        <position position="27"/>
    </location>
</feature>
<feature type="sequence conflict" description="In Ref. 1; AAA53132." evidence="1" ref="1">
    <original>A</original>
    <variation>D</variation>
    <location>
        <position position="58"/>
    </location>
</feature>
<feature type="sequence conflict" description="In Ref. 1; AAA53132." evidence="1" ref="1">
    <original>S</original>
    <variation>T</variation>
    <location>
        <position position="92"/>
    </location>
</feature>
<feature type="sequence conflict" description="In Ref. 1; AAA53132." evidence="1" ref="1">
    <original>CPFEPP</original>
    <variation>VHLNLL</variation>
    <location>
        <begin position="274"/>
        <end position="279"/>
    </location>
</feature>
<feature type="sequence conflict" description="In Ref. 1; AAA53132." evidence="1" ref="1">
    <original>L</original>
    <variation>I</variation>
    <location>
        <position position="336"/>
    </location>
</feature>
<feature type="sequence conflict" description="In Ref. 1; AAA53132." evidence="1" ref="1">
    <original>G</original>
    <variation>N</variation>
    <location>
        <position position="488"/>
    </location>
</feature>
<feature type="strand" evidence="2">
    <location>
        <begin position="31"/>
        <end position="33"/>
    </location>
</feature>
<feature type="turn" evidence="2">
    <location>
        <begin position="35"/>
        <end position="37"/>
    </location>
</feature>
<feature type="strand" evidence="2">
    <location>
        <begin position="38"/>
        <end position="41"/>
    </location>
</feature>
<feature type="helix" evidence="2">
    <location>
        <begin position="44"/>
        <end position="62"/>
    </location>
</feature>
<feature type="strand" evidence="2">
    <location>
        <begin position="71"/>
        <end position="75"/>
    </location>
</feature>
<feature type="strand" evidence="2">
    <location>
        <begin position="81"/>
        <end position="83"/>
    </location>
</feature>
<feature type="helix" evidence="2">
    <location>
        <begin position="87"/>
        <end position="91"/>
    </location>
</feature>
<feature type="helix" evidence="2">
    <location>
        <begin position="99"/>
        <end position="113"/>
    </location>
</feature>
<feature type="helix" evidence="2">
    <location>
        <begin position="119"/>
        <end position="137"/>
    </location>
</feature>
<feature type="turn" evidence="2">
    <location>
        <begin position="138"/>
        <end position="140"/>
    </location>
</feature>
<feature type="helix" evidence="2">
    <location>
        <begin position="143"/>
        <end position="163"/>
    </location>
</feature>
<feature type="helix" evidence="2">
    <location>
        <begin position="173"/>
        <end position="187"/>
    </location>
</feature>
<feature type="helix" evidence="2">
    <location>
        <begin position="188"/>
        <end position="190"/>
    </location>
</feature>
<feature type="helix" evidence="2">
    <location>
        <begin position="192"/>
        <end position="195"/>
    </location>
</feature>
<feature type="helix" evidence="2">
    <location>
        <begin position="197"/>
        <end position="209"/>
    </location>
</feature>
<feature type="strand" evidence="2">
    <location>
        <begin position="214"/>
        <end position="216"/>
    </location>
</feature>
<feature type="helix" evidence="2">
    <location>
        <begin position="221"/>
        <end position="223"/>
    </location>
</feature>
<feature type="strand" evidence="2">
    <location>
        <begin position="224"/>
        <end position="228"/>
    </location>
</feature>
<feature type="helix" evidence="2">
    <location>
        <begin position="234"/>
        <end position="236"/>
    </location>
</feature>
<feature type="strand" evidence="4">
    <location>
        <begin position="238"/>
        <end position="240"/>
    </location>
</feature>
<feature type="strand" evidence="2">
    <location>
        <begin position="249"/>
        <end position="251"/>
    </location>
</feature>
<feature type="strand" evidence="4">
    <location>
        <begin position="256"/>
        <end position="258"/>
    </location>
</feature>
<feature type="strand" evidence="2">
    <location>
        <begin position="269"/>
        <end position="274"/>
    </location>
</feature>
<feature type="strand" evidence="2">
    <location>
        <begin position="285"/>
        <end position="287"/>
    </location>
</feature>
<feature type="helix" evidence="2">
    <location>
        <begin position="291"/>
        <end position="316"/>
    </location>
</feature>
<feature type="strand" evidence="4">
    <location>
        <begin position="319"/>
        <end position="325"/>
    </location>
</feature>
<feature type="helix" evidence="2">
    <location>
        <begin position="329"/>
        <end position="337"/>
    </location>
</feature>
<feature type="helix" evidence="2">
    <location>
        <begin position="348"/>
        <end position="357"/>
    </location>
</feature>
<feature type="helix" evidence="2">
    <location>
        <begin position="366"/>
        <end position="368"/>
    </location>
</feature>
<feature type="helix" evidence="2">
    <location>
        <begin position="371"/>
        <end position="373"/>
    </location>
</feature>
<feature type="strand" evidence="2">
    <location>
        <begin position="378"/>
        <end position="383"/>
    </location>
</feature>
<feature type="strand" evidence="4">
    <location>
        <begin position="385"/>
        <end position="389"/>
    </location>
</feature>
<feature type="strand" evidence="2">
    <location>
        <begin position="392"/>
        <end position="396"/>
    </location>
</feature>
<feature type="strand" evidence="2">
    <location>
        <begin position="404"/>
        <end position="408"/>
    </location>
</feature>
<feature type="strand" evidence="2">
    <location>
        <begin position="410"/>
        <end position="412"/>
    </location>
</feature>
<feature type="helix" evidence="2">
    <location>
        <begin position="413"/>
        <end position="435"/>
    </location>
</feature>
<feature type="strand" evidence="2">
    <location>
        <begin position="438"/>
        <end position="440"/>
    </location>
</feature>
<feature type="helix" evidence="2">
    <location>
        <begin position="445"/>
        <end position="461"/>
    </location>
</feature>
<feature type="helix" evidence="2">
    <location>
        <begin position="463"/>
        <end position="465"/>
    </location>
</feature>
<feature type="helix" evidence="2">
    <location>
        <begin position="466"/>
        <end position="476"/>
    </location>
</feature>
<feature type="helix" evidence="2">
    <location>
        <begin position="478"/>
        <end position="486"/>
    </location>
</feature>
<feature type="helix" evidence="2">
    <location>
        <begin position="491"/>
        <end position="504"/>
    </location>
</feature>
<feature type="strand" evidence="3">
    <location>
        <begin position="520"/>
        <end position="522"/>
    </location>
</feature>
<feature type="turn" evidence="2">
    <location>
        <begin position="523"/>
        <end position="526"/>
    </location>
</feature>
<feature type="helix" evidence="2">
    <location>
        <begin position="531"/>
        <end position="549"/>
    </location>
</feature>
<feature type="strand" evidence="2">
    <location>
        <begin position="551"/>
        <end position="557"/>
    </location>
</feature>
<reference key="1">
    <citation type="submission" date="1994-11" db="EMBL/GenBank/DDBJ databases">
        <title>Cytosolic chaperonin(CCT) subunits have a conserved ATPase domain but diverged polypeptide-binding domains.</title>
        <authorList>
            <person name="Kim S."/>
        </authorList>
    </citation>
    <scope>NUCLEOTIDE SEQUENCE [GENOMIC DNA]</scope>
    <source>
        <strain>YPH501</strain>
    </source>
</reference>
<reference key="2">
    <citation type="journal article" date="1996" name="Yeast">
        <title>Analysis of a 62 kb DNA sequence of chromosome X reveals 36 open reading frames and a gene cluster with a counterpart on chromosome XI.</title>
        <authorList>
            <person name="Huang M.-E."/>
            <person name="Manus V."/>
            <person name="Chuat J.-C."/>
            <person name="Galibert F."/>
        </authorList>
    </citation>
    <scope>NUCLEOTIDE SEQUENCE [GENOMIC DNA]</scope>
    <source>
        <strain>ATCC 204508 / S288c</strain>
    </source>
</reference>
<reference key="3">
    <citation type="journal article" date="1996" name="EMBO J.">
        <title>Complete nucleotide sequence of Saccharomyces cerevisiae chromosome X.</title>
        <authorList>
            <person name="Galibert F."/>
            <person name="Alexandraki D."/>
            <person name="Baur A."/>
            <person name="Boles E."/>
            <person name="Chalwatzis N."/>
            <person name="Chuat J.-C."/>
            <person name="Coster F."/>
            <person name="Cziepluch C."/>
            <person name="de Haan M."/>
            <person name="Domdey H."/>
            <person name="Durand P."/>
            <person name="Entian K.-D."/>
            <person name="Gatius M."/>
            <person name="Goffeau A."/>
            <person name="Grivell L.A."/>
            <person name="Hennemann A."/>
            <person name="Herbert C.J."/>
            <person name="Heumann K."/>
            <person name="Hilger F."/>
            <person name="Hollenberg C.P."/>
            <person name="Huang M.-E."/>
            <person name="Jacq C."/>
            <person name="Jauniaux J.-C."/>
            <person name="Katsoulou C."/>
            <person name="Kirchrath L."/>
            <person name="Kleine K."/>
            <person name="Kordes E."/>
            <person name="Koetter P."/>
            <person name="Liebl S."/>
            <person name="Louis E.J."/>
            <person name="Manus V."/>
            <person name="Mewes H.-W."/>
            <person name="Miosga T."/>
            <person name="Obermaier B."/>
            <person name="Perea J."/>
            <person name="Pohl T.M."/>
            <person name="Portetelle D."/>
            <person name="Pujol A."/>
            <person name="Purnelle B."/>
            <person name="Ramezani Rad M."/>
            <person name="Rasmussen S.W."/>
            <person name="Rose M."/>
            <person name="Rossau R."/>
            <person name="Schaaff-Gerstenschlaeger I."/>
            <person name="Smits P.H.M."/>
            <person name="Scarcez T."/>
            <person name="Soriano N."/>
            <person name="To Van D."/>
            <person name="Tzermia M."/>
            <person name="Van Broekhoven A."/>
            <person name="Vandenbol M."/>
            <person name="Wedler H."/>
            <person name="von Wettstein D."/>
            <person name="Wambutt R."/>
            <person name="Zagulski M."/>
            <person name="Zollner A."/>
            <person name="Karpfinger-Hartl L."/>
        </authorList>
    </citation>
    <scope>NUCLEOTIDE SEQUENCE [LARGE SCALE GENOMIC DNA]</scope>
    <source>
        <strain>ATCC 204508 / S288c</strain>
    </source>
</reference>
<reference key="4">
    <citation type="journal article" date="2014" name="G3 (Bethesda)">
        <title>The reference genome sequence of Saccharomyces cerevisiae: Then and now.</title>
        <authorList>
            <person name="Engel S.R."/>
            <person name="Dietrich F.S."/>
            <person name="Fisk D.G."/>
            <person name="Binkley G."/>
            <person name="Balakrishnan R."/>
            <person name="Costanzo M.C."/>
            <person name="Dwight S.S."/>
            <person name="Hitz B.C."/>
            <person name="Karra K."/>
            <person name="Nash R.S."/>
            <person name="Weng S."/>
            <person name="Wong E.D."/>
            <person name="Lloyd P."/>
            <person name="Skrzypek M.S."/>
            <person name="Miyasato S.R."/>
            <person name="Simison M."/>
            <person name="Cherry J.M."/>
        </authorList>
    </citation>
    <scope>GENOME REANNOTATION</scope>
    <source>
        <strain>ATCC 204508 / S288c</strain>
    </source>
</reference>
<dbReference type="EMBL" id="L37350">
    <property type="protein sequence ID" value="AAA53132.1"/>
    <property type="status" value="ALT_INIT"/>
    <property type="molecule type" value="Genomic_DNA"/>
</dbReference>
<dbReference type="EMBL" id="L47993">
    <property type="protein sequence ID" value="AAB39290.1"/>
    <property type="molecule type" value="Genomic_DNA"/>
</dbReference>
<dbReference type="EMBL" id="Z49564">
    <property type="protein sequence ID" value="CAA89592.1"/>
    <property type="molecule type" value="Genomic_DNA"/>
</dbReference>
<dbReference type="EMBL" id="BK006943">
    <property type="protein sequence ID" value="DAA08851.1"/>
    <property type="molecule type" value="Genomic_DNA"/>
</dbReference>
<dbReference type="PIR" id="S57083">
    <property type="entry name" value="S57083"/>
</dbReference>
<dbReference type="RefSeq" id="NP_012598.1">
    <property type="nucleotide sequence ID" value="NM_001181722.1"/>
</dbReference>
<dbReference type="PDB" id="4V81">
    <property type="method" value="X-ray"/>
    <property type="resolution" value="3.80 A"/>
    <property type="chains" value="E/M/e/m=1-562"/>
</dbReference>
<dbReference type="PDB" id="4V8R">
    <property type="method" value="X-ray"/>
    <property type="resolution" value="3.80 A"/>
    <property type="chains" value="AE/Ae/BE/Be=1-562"/>
</dbReference>
<dbReference type="PDB" id="4V94">
    <property type="method" value="X-ray"/>
    <property type="resolution" value="3.80 A"/>
    <property type="chains" value="E/M/e/m=1-562"/>
</dbReference>
<dbReference type="PDB" id="5GW4">
    <property type="method" value="EM"/>
    <property type="resolution" value="4.70 A"/>
    <property type="chains" value="E/e=1-562"/>
</dbReference>
<dbReference type="PDB" id="5GW5">
    <property type="method" value="EM"/>
    <property type="resolution" value="4.60 A"/>
    <property type="chains" value="E/e=1-562"/>
</dbReference>
<dbReference type="PDB" id="6KRD">
    <property type="method" value="EM"/>
    <property type="resolution" value="4.38 A"/>
    <property type="chains" value="E/e=1-562"/>
</dbReference>
<dbReference type="PDB" id="6KRE">
    <property type="method" value="EM"/>
    <property type="resolution" value="4.45 A"/>
    <property type="chains" value="E/e=1-562"/>
</dbReference>
<dbReference type="PDB" id="6KS6">
    <property type="method" value="EM"/>
    <property type="resolution" value="2.99 A"/>
    <property type="chains" value="E/e=1-562"/>
</dbReference>
<dbReference type="PDB" id="6KS8">
    <property type="method" value="EM"/>
    <property type="resolution" value="4.69 A"/>
    <property type="chains" value="E/e=1-562"/>
</dbReference>
<dbReference type="PDB" id="7YLU">
    <property type="method" value="EM"/>
    <property type="resolution" value="4.55 A"/>
    <property type="chains" value="E/e=1-562"/>
</dbReference>
<dbReference type="PDB" id="7YLV">
    <property type="method" value="EM"/>
    <property type="resolution" value="3.91 A"/>
    <property type="chains" value="E/e=1-562"/>
</dbReference>
<dbReference type="PDB" id="7YLW">
    <property type="method" value="EM"/>
    <property type="resolution" value="3.39 A"/>
    <property type="chains" value="E/e=1-562"/>
</dbReference>
<dbReference type="PDB" id="7YLX">
    <property type="method" value="EM"/>
    <property type="resolution" value="3.20 A"/>
    <property type="chains" value="E/e=1-562"/>
</dbReference>
<dbReference type="PDB" id="7YLY">
    <property type="method" value="EM"/>
    <property type="resolution" value="3.05 A"/>
    <property type="chains" value="E/e=1-562"/>
</dbReference>
<dbReference type="PDB" id="9CR2">
    <property type="method" value="EM"/>
    <property type="resolution" value="4.80 A"/>
    <property type="chains" value="E/e=1-562"/>
</dbReference>
<dbReference type="PDB" id="9CS3">
    <property type="method" value="EM"/>
    <property type="resolution" value="5.60 A"/>
    <property type="chains" value="E/e=1-562"/>
</dbReference>
<dbReference type="PDB" id="9CS4">
    <property type="method" value="EM"/>
    <property type="resolution" value="6.80 A"/>
    <property type="chains" value="E/e=1-562"/>
</dbReference>
<dbReference type="PDB" id="9CS6">
    <property type="method" value="EM"/>
    <property type="resolution" value="4.10 A"/>
    <property type="chains" value="E/e=1-562"/>
</dbReference>
<dbReference type="PDB" id="9CSA">
    <property type="method" value="EM"/>
    <property type="resolution" value="3.60 A"/>
    <property type="chains" value="E/e=1-562"/>
</dbReference>
<dbReference type="PDBsum" id="4V81"/>
<dbReference type="PDBsum" id="4V8R"/>
<dbReference type="PDBsum" id="4V94"/>
<dbReference type="PDBsum" id="5GW4"/>
<dbReference type="PDBsum" id="5GW5"/>
<dbReference type="PDBsum" id="6KRD"/>
<dbReference type="PDBsum" id="6KRE"/>
<dbReference type="PDBsum" id="6KS6"/>
<dbReference type="PDBsum" id="6KS8"/>
<dbReference type="PDBsum" id="7YLU"/>
<dbReference type="PDBsum" id="7YLV"/>
<dbReference type="PDBsum" id="7YLW"/>
<dbReference type="PDBsum" id="7YLX"/>
<dbReference type="PDBsum" id="7YLY"/>
<dbReference type="PDBsum" id="9CR2"/>
<dbReference type="PDBsum" id="9CS3"/>
<dbReference type="PDBsum" id="9CS4"/>
<dbReference type="PDBsum" id="9CS6"/>
<dbReference type="PDBsum" id="9CSA"/>
<dbReference type="EMDB" id="EMD-0756"/>
<dbReference type="EMDB" id="EMD-0757"/>
<dbReference type="EMDB" id="EMD-0758"/>
<dbReference type="EMDB" id="EMD-0759"/>
<dbReference type="EMDB" id="EMD-0760"/>
<dbReference type="EMDB" id="EMD-33917"/>
<dbReference type="EMDB" id="EMD-33918"/>
<dbReference type="EMDB" id="EMD-33919"/>
<dbReference type="EMDB" id="EMD-33920"/>
<dbReference type="EMDB" id="EMD-33921"/>
<dbReference type="EMDB" id="EMD-45830"/>
<dbReference type="EMDB" id="EMD-45886"/>
<dbReference type="EMDB" id="EMD-45887"/>
<dbReference type="EMDB" id="EMD-45888"/>
<dbReference type="EMDB" id="EMD-45889"/>
<dbReference type="EMDB" id="EMD-6902"/>
<dbReference type="EMDB" id="EMD-9540"/>
<dbReference type="EMDB" id="EMD-9541"/>
<dbReference type="SMR" id="P40413"/>
<dbReference type="BioGRID" id="33821">
    <property type="interactions" value="254"/>
</dbReference>
<dbReference type="ComplexPortal" id="CPX-2156">
    <property type="entry name" value="Chaperonin-containing T-complex"/>
</dbReference>
<dbReference type="DIP" id="DIP-2205N"/>
<dbReference type="FunCoup" id="P40413">
    <property type="interactions" value="1625"/>
</dbReference>
<dbReference type="IntAct" id="P40413">
    <property type="interactions" value="49"/>
</dbReference>
<dbReference type="MINT" id="P40413"/>
<dbReference type="STRING" id="4932.YJR064W"/>
<dbReference type="iPTMnet" id="P40413"/>
<dbReference type="PaxDb" id="4932-YJR064W"/>
<dbReference type="PeptideAtlas" id="P40413"/>
<dbReference type="DNASU" id="853527"/>
<dbReference type="EnsemblFungi" id="YJR064W_mRNA">
    <property type="protein sequence ID" value="YJR064W"/>
    <property type="gene ID" value="YJR064W"/>
</dbReference>
<dbReference type="GeneID" id="853527"/>
<dbReference type="KEGG" id="sce:YJR064W"/>
<dbReference type="AGR" id="SGD:S000003825"/>
<dbReference type="SGD" id="S000003825">
    <property type="gene designation" value="CCT5"/>
</dbReference>
<dbReference type="VEuPathDB" id="FungiDB:YJR064W"/>
<dbReference type="eggNOG" id="KOG0357">
    <property type="taxonomic scope" value="Eukaryota"/>
</dbReference>
<dbReference type="GeneTree" id="ENSGT00550000074988"/>
<dbReference type="HOGENOM" id="CLU_008891_7_2_1"/>
<dbReference type="InParanoid" id="P40413"/>
<dbReference type="OMA" id="SHPQMPH"/>
<dbReference type="OrthoDB" id="10248520at2759"/>
<dbReference type="BioCyc" id="YEAST:G3O-31697-MONOMER"/>
<dbReference type="BRENDA" id="3.6.4.B10">
    <property type="organism ID" value="984"/>
</dbReference>
<dbReference type="Reactome" id="R-SCE-390471">
    <property type="pathway name" value="Association of TriC/CCT with target proteins during biosynthesis"/>
</dbReference>
<dbReference type="Reactome" id="R-SCE-6814122">
    <property type="pathway name" value="Cooperation of PDCL (PhLP1) and TRiC/CCT in G-protein beta folding"/>
</dbReference>
<dbReference type="BioGRID-ORCS" id="853527">
    <property type="hits" value="8 hits in 10 CRISPR screens"/>
</dbReference>
<dbReference type="PRO" id="PR:P40413"/>
<dbReference type="Proteomes" id="UP000002311">
    <property type="component" value="Chromosome X"/>
</dbReference>
<dbReference type="RNAct" id="P40413">
    <property type="molecule type" value="protein"/>
</dbReference>
<dbReference type="GO" id="GO:0005832">
    <property type="term" value="C:chaperonin-containing T-complex"/>
    <property type="evidence" value="ECO:0000314"/>
    <property type="project" value="SGD"/>
</dbReference>
<dbReference type="GO" id="GO:0005524">
    <property type="term" value="F:ATP binding"/>
    <property type="evidence" value="ECO:0007669"/>
    <property type="project" value="UniProtKB-KW"/>
</dbReference>
<dbReference type="GO" id="GO:0016887">
    <property type="term" value="F:ATP hydrolysis activity"/>
    <property type="evidence" value="ECO:0007669"/>
    <property type="project" value="InterPro"/>
</dbReference>
<dbReference type="GO" id="GO:0140662">
    <property type="term" value="F:ATP-dependent protein folding chaperone"/>
    <property type="evidence" value="ECO:0007669"/>
    <property type="project" value="InterPro"/>
</dbReference>
<dbReference type="GO" id="GO:0051082">
    <property type="term" value="F:unfolded protein binding"/>
    <property type="evidence" value="ECO:0000314"/>
    <property type="project" value="SGD"/>
</dbReference>
<dbReference type="GO" id="GO:0051086">
    <property type="term" value="P:chaperone mediated protein folding independent of cofactor"/>
    <property type="evidence" value="ECO:0000314"/>
    <property type="project" value="ComplexPortal"/>
</dbReference>
<dbReference type="GO" id="GO:0006457">
    <property type="term" value="P:protein folding"/>
    <property type="evidence" value="ECO:0000314"/>
    <property type="project" value="SGD"/>
</dbReference>
<dbReference type="CDD" id="cd03339">
    <property type="entry name" value="TCP1_epsilon"/>
    <property type="match status" value="1"/>
</dbReference>
<dbReference type="FunFam" id="3.50.7.10:FF:000003">
    <property type="entry name" value="T-complex protein 1 subunit epsilon"/>
    <property type="match status" value="1"/>
</dbReference>
<dbReference type="Gene3D" id="3.50.7.10">
    <property type="entry name" value="GroEL"/>
    <property type="match status" value="1"/>
</dbReference>
<dbReference type="Gene3D" id="1.10.560.10">
    <property type="entry name" value="GroEL-like equatorial domain"/>
    <property type="match status" value="1"/>
</dbReference>
<dbReference type="Gene3D" id="3.30.260.10">
    <property type="entry name" value="TCP-1-like chaperonin intermediate domain"/>
    <property type="match status" value="1"/>
</dbReference>
<dbReference type="InterPro" id="IPR012718">
    <property type="entry name" value="Chap_CCT_epsi"/>
</dbReference>
<dbReference type="InterPro" id="IPR017998">
    <property type="entry name" value="Chaperone_TCP-1"/>
</dbReference>
<dbReference type="InterPro" id="IPR002194">
    <property type="entry name" value="Chaperonin_TCP-1_CS"/>
</dbReference>
<dbReference type="InterPro" id="IPR002423">
    <property type="entry name" value="Cpn60/GroEL/TCP-1"/>
</dbReference>
<dbReference type="InterPro" id="IPR027409">
    <property type="entry name" value="GroEL-like_apical_dom_sf"/>
</dbReference>
<dbReference type="InterPro" id="IPR027413">
    <property type="entry name" value="GROEL-like_equatorial_sf"/>
</dbReference>
<dbReference type="InterPro" id="IPR027410">
    <property type="entry name" value="TCP-1-like_intermed_sf"/>
</dbReference>
<dbReference type="InterPro" id="IPR053374">
    <property type="entry name" value="TCP-1_chaperonin"/>
</dbReference>
<dbReference type="InterPro" id="IPR054827">
    <property type="entry name" value="thermosome_alpha"/>
</dbReference>
<dbReference type="NCBIfam" id="TIGR02343">
    <property type="entry name" value="chap_CCT_epsi"/>
    <property type="match status" value="1"/>
</dbReference>
<dbReference type="NCBIfam" id="NF041082">
    <property type="entry name" value="thermosome_alpha"/>
    <property type="match status" value="1"/>
</dbReference>
<dbReference type="NCBIfam" id="NF041083">
    <property type="entry name" value="thermosome_beta"/>
    <property type="match status" value="1"/>
</dbReference>
<dbReference type="PANTHER" id="PTHR11353">
    <property type="entry name" value="CHAPERONIN"/>
    <property type="match status" value="1"/>
</dbReference>
<dbReference type="Pfam" id="PF00118">
    <property type="entry name" value="Cpn60_TCP1"/>
    <property type="match status" value="1"/>
</dbReference>
<dbReference type="PRINTS" id="PR00304">
    <property type="entry name" value="TCOMPLEXTCP1"/>
</dbReference>
<dbReference type="SUPFAM" id="SSF52029">
    <property type="entry name" value="GroEL apical domain-like"/>
    <property type="match status" value="1"/>
</dbReference>
<dbReference type="SUPFAM" id="SSF48592">
    <property type="entry name" value="GroEL equatorial domain-like"/>
    <property type="match status" value="1"/>
</dbReference>
<dbReference type="SUPFAM" id="SSF54849">
    <property type="entry name" value="GroEL-intermediate domain like"/>
    <property type="match status" value="1"/>
</dbReference>
<dbReference type="PROSITE" id="PS00750">
    <property type="entry name" value="TCP1_1"/>
    <property type="match status" value="1"/>
</dbReference>
<dbReference type="PROSITE" id="PS00995">
    <property type="entry name" value="TCP1_3"/>
    <property type="match status" value="1"/>
</dbReference>
<accession>P40413</accession>
<accession>D6VWN5</accession>
<sequence length="562" mass="61914">MAARPQQPPMEMPDLSNAIVAQDEMGRPFIIVKDQGNKKRQHGLEAKKSHILAARSVASIIKTSLGPRGLDKILISPDGEITITNDGATILSQMELDNEIAKLLVQLSKSQDDEIGDGTTGVVVLASALLDQALELIQKGIHPIKIANGFDEAAKLAISKLEETCDDISASNDELFRDFLLRAAKTSLGSKIVSKDHDRFAEMAVEAVINVMDKDRKDVDFDLIKMQGRVGGSISDSKLINGVILDKDFSHPQMPKCVLPKEGSDGVKLAILTCPFEPPKPKTKHKLDISSVEEYQKLQTYEQDKFKEMIDDVKKAGADVVICQWGFDDEANHLLLQNDLPAVRWVGGQELEHIAISTNGRIVPRFQDLSKDKLGTCSRIYEQEFGTTKDRMLIIEQSKETKTVTCFVRGSNKMIVDEAERALHDSLCVVRNLVKDSRVVYGGGAAEVTMSLAVSEEADKQRGIDQYAFRGFAQALDTIPMTLAENSGLDPIGTLSTLKSKQLKEKISNIGVDCLGYGSNDMKELFVVDPFIGKKQQILLATQLCRMILKIDNVIISGKDEY</sequence>
<name>TCPE_YEAST</name>
<proteinExistence type="evidence at protein level"/>
<keyword id="KW-0002">3D-structure</keyword>
<keyword id="KW-0067">ATP-binding</keyword>
<keyword id="KW-0143">Chaperone</keyword>
<keyword id="KW-0963">Cytoplasm</keyword>
<keyword id="KW-0547">Nucleotide-binding</keyword>
<keyword id="KW-1185">Reference proteome</keyword>
<gene>
    <name type="primary">CCT5</name>
    <name type="synonym">TCP5</name>
    <name type="ordered locus">YJR064W</name>
    <name type="ORF">J1752</name>
</gene>